<gene>
    <name evidence="1" type="primary">rpmA</name>
    <name type="ordered locus">jhp_0282</name>
</gene>
<keyword id="KW-0687">Ribonucleoprotein</keyword>
<keyword id="KW-0689">Ribosomal protein</keyword>
<proteinExistence type="inferred from homology"/>
<accession>Q9ZMD8</accession>
<evidence type="ECO:0000255" key="1">
    <source>
        <dbReference type="HAMAP-Rule" id="MF_00539"/>
    </source>
</evidence>
<evidence type="ECO:0000256" key="2">
    <source>
        <dbReference type="SAM" id="MobiDB-lite"/>
    </source>
</evidence>
<evidence type="ECO:0000305" key="3"/>
<organism>
    <name type="scientific">Helicobacter pylori (strain J99 / ATCC 700824)</name>
    <name type="common">Campylobacter pylori J99</name>
    <dbReference type="NCBI Taxonomy" id="85963"/>
    <lineage>
        <taxon>Bacteria</taxon>
        <taxon>Pseudomonadati</taxon>
        <taxon>Campylobacterota</taxon>
        <taxon>Epsilonproteobacteria</taxon>
        <taxon>Campylobacterales</taxon>
        <taxon>Helicobacteraceae</taxon>
        <taxon>Helicobacter</taxon>
    </lineage>
</organism>
<name>RL27_HELPJ</name>
<dbReference type="EMBL" id="AE001439">
    <property type="protein sequence ID" value="AAD05863.1"/>
    <property type="molecule type" value="Genomic_DNA"/>
</dbReference>
<dbReference type="PIR" id="E71951">
    <property type="entry name" value="E71951"/>
</dbReference>
<dbReference type="RefSeq" id="WP_000940604.1">
    <property type="nucleotide sequence ID" value="NZ_CP011330.1"/>
</dbReference>
<dbReference type="SMR" id="Q9ZMD8"/>
<dbReference type="KEGG" id="hpj:jhp_0282"/>
<dbReference type="PATRIC" id="fig|85963.30.peg.731"/>
<dbReference type="eggNOG" id="COG0211">
    <property type="taxonomic scope" value="Bacteria"/>
</dbReference>
<dbReference type="Proteomes" id="UP000000804">
    <property type="component" value="Chromosome"/>
</dbReference>
<dbReference type="GO" id="GO:0022625">
    <property type="term" value="C:cytosolic large ribosomal subunit"/>
    <property type="evidence" value="ECO:0007669"/>
    <property type="project" value="TreeGrafter"/>
</dbReference>
<dbReference type="GO" id="GO:0003735">
    <property type="term" value="F:structural constituent of ribosome"/>
    <property type="evidence" value="ECO:0007669"/>
    <property type="project" value="InterPro"/>
</dbReference>
<dbReference type="GO" id="GO:0006412">
    <property type="term" value="P:translation"/>
    <property type="evidence" value="ECO:0007669"/>
    <property type="project" value="UniProtKB-UniRule"/>
</dbReference>
<dbReference type="FunFam" id="2.40.50.100:FF:000026">
    <property type="entry name" value="50S ribosomal protein L27"/>
    <property type="match status" value="1"/>
</dbReference>
<dbReference type="Gene3D" id="2.40.50.100">
    <property type="match status" value="1"/>
</dbReference>
<dbReference type="HAMAP" id="MF_00539">
    <property type="entry name" value="Ribosomal_bL27"/>
    <property type="match status" value="1"/>
</dbReference>
<dbReference type="InterPro" id="IPR001684">
    <property type="entry name" value="Ribosomal_bL27"/>
</dbReference>
<dbReference type="InterPro" id="IPR018261">
    <property type="entry name" value="Ribosomal_bL27_CS"/>
</dbReference>
<dbReference type="NCBIfam" id="TIGR00062">
    <property type="entry name" value="L27"/>
    <property type="match status" value="1"/>
</dbReference>
<dbReference type="PANTHER" id="PTHR15893:SF0">
    <property type="entry name" value="LARGE RIBOSOMAL SUBUNIT PROTEIN BL27M"/>
    <property type="match status" value="1"/>
</dbReference>
<dbReference type="PANTHER" id="PTHR15893">
    <property type="entry name" value="RIBOSOMAL PROTEIN L27"/>
    <property type="match status" value="1"/>
</dbReference>
<dbReference type="Pfam" id="PF01016">
    <property type="entry name" value="Ribosomal_L27"/>
    <property type="match status" value="1"/>
</dbReference>
<dbReference type="PRINTS" id="PR00063">
    <property type="entry name" value="RIBOSOMALL27"/>
</dbReference>
<dbReference type="SUPFAM" id="SSF110324">
    <property type="entry name" value="Ribosomal L27 protein-like"/>
    <property type="match status" value="1"/>
</dbReference>
<dbReference type="PROSITE" id="PS00831">
    <property type="entry name" value="RIBOSOMAL_L27"/>
    <property type="match status" value="1"/>
</dbReference>
<sequence length="88" mass="9676">MAHKKGQGSTQNNRDSAGRRLGVKKFGSEFVRAGNIIVRQRGTKIHPGNNVGMGKDHTLYALIDGVVKFEHKDRSRKKVSVISGNFGE</sequence>
<reference key="1">
    <citation type="journal article" date="1999" name="Nature">
        <title>Genomic sequence comparison of two unrelated isolates of the human gastric pathogen Helicobacter pylori.</title>
        <authorList>
            <person name="Alm R.A."/>
            <person name="Ling L.-S.L."/>
            <person name="Moir D.T."/>
            <person name="King B.L."/>
            <person name="Brown E.D."/>
            <person name="Doig P.C."/>
            <person name="Smith D.R."/>
            <person name="Noonan B."/>
            <person name="Guild B.C."/>
            <person name="deJonge B.L."/>
            <person name="Carmel G."/>
            <person name="Tummino P.J."/>
            <person name="Caruso A."/>
            <person name="Uria-Nickelsen M."/>
            <person name="Mills D.M."/>
            <person name="Ives C."/>
            <person name="Gibson R."/>
            <person name="Merberg D."/>
            <person name="Mills S.D."/>
            <person name="Jiang Q."/>
            <person name="Taylor D.E."/>
            <person name="Vovis G.F."/>
            <person name="Trust T.J."/>
        </authorList>
    </citation>
    <scope>NUCLEOTIDE SEQUENCE [LARGE SCALE GENOMIC DNA]</scope>
    <source>
        <strain>J99 / ATCC 700824</strain>
    </source>
</reference>
<feature type="chain" id="PRO_0000181100" description="Large ribosomal subunit protein bL27">
    <location>
        <begin position="1"/>
        <end position="88"/>
    </location>
</feature>
<feature type="region of interest" description="Disordered" evidence="2">
    <location>
        <begin position="1"/>
        <end position="21"/>
    </location>
</feature>
<comment type="similarity">
    <text evidence="1">Belongs to the bacterial ribosomal protein bL27 family.</text>
</comment>
<protein>
    <recommendedName>
        <fullName evidence="1">Large ribosomal subunit protein bL27</fullName>
    </recommendedName>
    <alternativeName>
        <fullName evidence="3">50S ribosomal protein L27</fullName>
    </alternativeName>
</protein>